<accession>Q9JUC8</accession>
<accession>A1IS03</accession>
<organism>
    <name type="scientific">Neisseria meningitidis serogroup A / serotype 4A (strain DSM 15465 / Z2491)</name>
    <dbReference type="NCBI Taxonomy" id="122587"/>
    <lineage>
        <taxon>Bacteria</taxon>
        <taxon>Pseudomonadati</taxon>
        <taxon>Pseudomonadota</taxon>
        <taxon>Betaproteobacteria</taxon>
        <taxon>Neisseriales</taxon>
        <taxon>Neisseriaceae</taxon>
        <taxon>Neisseria</taxon>
    </lineage>
</organism>
<sequence length="327" mass="37033">MSEIKTDDPKRGIKLRGADKTARIPIKVVPLQEKLKKPEWIRAKLPSRKFFEIKDILREQKMHTVCEEASCPNIGECFSKGTATFMIMGDICTRRCPFCDVGHGRPNMLDPDEPKNLAESVKAMNLRYVVITSVDRDDLRDGGAQHFADCIKAIRETSPNTKIEILVPDFRGRLDIALKILAETPPDVMNHNLETHPSLYRKARPGANYQHSLDLLKRYKEMMPHIPTKSGIMVGLGETDEDVREIMRDMRAHNIEMITIGQYLQPSDGHLPVLRYVTPEQFKIFEKEAYELGFSNAAIGAMVRSSYHADEQAAEALRESHGGCGHH</sequence>
<keyword id="KW-0004">4Fe-4S</keyword>
<keyword id="KW-0963">Cytoplasm</keyword>
<keyword id="KW-0408">Iron</keyword>
<keyword id="KW-0411">Iron-sulfur</keyword>
<keyword id="KW-0479">Metal-binding</keyword>
<keyword id="KW-0949">S-adenosyl-L-methionine</keyword>
<keyword id="KW-0808">Transferase</keyword>
<proteinExistence type="inferred from homology"/>
<reference key="1">
    <citation type="journal article" date="2000" name="Nature">
        <title>Complete DNA sequence of a serogroup A strain of Neisseria meningitidis Z2491.</title>
        <authorList>
            <person name="Parkhill J."/>
            <person name="Achtman M."/>
            <person name="James K.D."/>
            <person name="Bentley S.D."/>
            <person name="Churcher C.M."/>
            <person name="Klee S.R."/>
            <person name="Morelli G."/>
            <person name="Basham D."/>
            <person name="Brown D."/>
            <person name="Chillingworth T."/>
            <person name="Davies R.M."/>
            <person name="Davis P."/>
            <person name="Devlin K."/>
            <person name="Feltwell T."/>
            <person name="Hamlin N."/>
            <person name="Holroyd S."/>
            <person name="Jagels K."/>
            <person name="Leather S."/>
            <person name="Moule S."/>
            <person name="Mungall K.L."/>
            <person name="Quail M.A."/>
            <person name="Rajandream M.A."/>
            <person name="Rutherford K.M."/>
            <person name="Simmonds M."/>
            <person name="Skelton J."/>
            <person name="Whitehead S."/>
            <person name="Spratt B.G."/>
            <person name="Barrell B.G."/>
        </authorList>
    </citation>
    <scope>NUCLEOTIDE SEQUENCE [LARGE SCALE GENOMIC DNA]</scope>
    <source>
        <strain>DSM 15465 / Z2491</strain>
    </source>
</reference>
<dbReference type="EC" id="2.8.1.8" evidence="1"/>
<dbReference type="EMBL" id="AL157959">
    <property type="protein sequence ID" value="CAM08551.1"/>
    <property type="molecule type" value="Genomic_DNA"/>
</dbReference>
<dbReference type="PIR" id="D81907">
    <property type="entry name" value="D81907"/>
</dbReference>
<dbReference type="RefSeq" id="WP_002213532.1">
    <property type="nucleotide sequence ID" value="NC_003116.1"/>
</dbReference>
<dbReference type="SMR" id="Q9JUC8"/>
<dbReference type="EnsemblBacteria" id="CAM08551">
    <property type="protein sequence ID" value="CAM08551"/>
    <property type="gene ID" value="NMA1378"/>
</dbReference>
<dbReference type="GeneID" id="93386017"/>
<dbReference type="KEGG" id="nma:NMA1378"/>
<dbReference type="HOGENOM" id="CLU_033144_2_1_4"/>
<dbReference type="UniPathway" id="UPA00538">
    <property type="reaction ID" value="UER00593"/>
</dbReference>
<dbReference type="Proteomes" id="UP000000626">
    <property type="component" value="Chromosome"/>
</dbReference>
<dbReference type="GO" id="GO:0005737">
    <property type="term" value="C:cytoplasm"/>
    <property type="evidence" value="ECO:0007669"/>
    <property type="project" value="UniProtKB-SubCell"/>
</dbReference>
<dbReference type="GO" id="GO:0051539">
    <property type="term" value="F:4 iron, 4 sulfur cluster binding"/>
    <property type="evidence" value="ECO:0007669"/>
    <property type="project" value="UniProtKB-UniRule"/>
</dbReference>
<dbReference type="GO" id="GO:0016992">
    <property type="term" value="F:lipoate synthase activity"/>
    <property type="evidence" value="ECO:0007669"/>
    <property type="project" value="UniProtKB-UniRule"/>
</dbReference>
<dbReference type="GO" id="GO:0046872">
    <property type="term" value="F:metal ion binding"/>
    <property type="evidence" value="ECO:0007669"/>
    <property type="project" value="UniProtKB-KW"/>
</dbReference>
<dbReference type="CDD" id="cd01335">
    <property type="entry name" value="Radical_SAM"/>
    <property type="match status" value="1"/>
</dbReference>
<dbReference type="FunFam" id="3.20.20.70:FF:000023">
    <property type="entry name" value="Lipoyl synthase"/>
    <property type="match status" value="1"/>
</dbReference>
<dbReference type="Gene3D" id="3.20.20.70">
    <property type="entry name" value="Aldolase class I"/>
    <property type="match status" value="1"/>
</dbReference>
<dbReference type="HAMAP" id="MF_00206">
    <property type="entry name" value="Lipoyl_synth"/>
    <property type="match status" value="1"/>
</dbReference>
<dbReference type="InterPro" id="IPR013785">
    <property type="entry name" value="Aldolase_TIM"/>
</dbReference>
<dbReference type="InterPro" id="IPR006638">
    <property type="entry name" value="Elp3/MiaA/NifB-like_rSAM"/>
</dbReference>
<dbReference type="InterPro" id="IPR031691">
    <property type="entry name" value="LIAS_N"/>
</dbReference>
<dbReference type="InterPro" id="IPR003698">
    <property type="entry name" value="Lipoyl_synth"/>
</dbReference>
<dbReference type="InterPro" id="IPR007197">
    <property type="entry name" value="rSAM"/>
</dbReference>
<dbReference type="NCBIfam" id="TIGR00510">
    <property type="entry name" value="lipA"/>
    <property type="match status" value="1"/>
</dbReference>
<dbReference type="NCBIfam" id="NF004019">
    <property type="entry name" value="PRK05481.1"/>
    <property type="match status" value="1"/>
</dbReference>
<dbReference type="NCBIfam" id="NF009544">
    <property type="entry name" value="PRK12928.1"/>
    <property type="match status" value="1"/>
</dbReference>
<dbReference type="PANTHER" id="PTHR10949">
    <property type="entry name" value="LIPOYL SYNTHASE"/>
    <property type="match status" value="1"/>
</dbReference>
<dbReference type="PANTHER" id="PTHR10949:SF0">
    <property type="entry name" value="LIPOYL SYNTHASE, MITOCHONDRIAL"/>
    <property type="match status" value="1"/>
</dbReference>
<dbReference type="Pfam" id="PF16881">
    <property type="entry name" value="LIAS_N"/>
    <property type="match status" value="1"/>
</dbReference>
<dbReference type="Pfam" id="PF04055">
    <property type="entry name" value="Radical_SAM"/>
    <property type="match status" value="1"/>
</dbReference>
<dbReference type="PIRSF" id="PIRSF005963">
    <property type="entry name" value="Lipoyl_synth"/>
    <property type="match status" value="1"/>
</dbReference>
<dbReference type="SFLD" id="SFLDF00271">
    <property type="entry name" value="lipoyl_synthase"/>
    <property type="match status" value="1"/>
</dbReference>
<dbReference type="SFLD" id="SFLDG01058">
    <property type="entry name" value="lipoyl_synthase_like"/>
    <property type="match status" value="1"/>
</dbReference>
<dbReference type="SMART" id="SM00729">
    <property type="entry name" value="Elp3"/>
    <property type="match status" value="1"/>
</dbReference>
<dbReference type="SUPFAM" id="SSF102114">
    <property type="entry name" value="Radical SAM enzymes"/>
    <property type="match status" value="1"/>
</dbReference>
<dbReference type="PROSITE" id="PS51918">
    <property type="entry name" value="RADICAL_SAM"/>
    <property type="match status" value="1"/>
</dbReference>
<feature type="chain" id="PRO_0000102328" description="Lipoyl synthase">
    <location>
        <begin position="1"/>
        <end position="327"/>
    </location>
</feature>
<feature type="domain" description="Radical SAM core" evidence="2">
    <location>
        <begin position="78"/>
        <end position="295"/>
    </location>
</feature>
<feature type="binding site" evidence="1">
    <location>
        <position position="66"/>
    </location>
    <ligand>
        <name>[4Fe-4S] cluster</name>
        <dbReference type="ChEBI" id="CHEBI:49883"/>
        <label>1</label>
    </ligand>
</feature>
<feature type="binding site" evidence="1">
    <location>
        <position position="71"/>
    </location>
    <ligand>
        <name>[4Fe-4S] cluster</name>
        <dbReference type="ChEBI" id="CHEBI:49883"/>
        <label>1</label>
    </ligand>
</feature>
<feature type="binding site" evidence="1">
    <location>
        <position position="77"/>
    </location>
    <ligand>
        <name>[4Fe-4S] cluster</name>
        <dbReference type="ChEBI" id="CHEBI:49883"/>
        <label>1</label>
    </ligand>
</feature>
<feature type="binding site" evidence="1">
    <location>
        <position position="92"/>
    </location>
    <ligand>
        <name>[4Fe-4S] cluster</name>
        <dbReference type="ChEBI" id="CHEBI:49883"/>
        <label>2</label>
        <note>4Fe-4S-S-AdoMet</note>
    </ligand>
</feature>
<feature type="binding site" evidence="1">
    <location>
        <position position="96"/>
    </location>
    <ligand>
        <name>[4Fe-4S] cluster</name>
        <dbReference type="ChEBI" id="CHEBI:49883"/>
        <label>2</label>
        <note>4Fe-4S-S-AdoMet</note>
    </ligand>
</feature>
<feature type="binding site" evidence="1">
    <location>
        <position position="99"/>
    </location>
    <ligand>
        <name>[4Fe-4S] cluster</name>
        <dbReference type="ChEBI" id="CHEBI:49883"/>
        <label>2</label>
        <note>4Fe-4S-S-AdoMet</note>
    </ligand>
</feature>
<feature type="binding site" evidence="1">
    <location>
        <position position="306"/>
    </location>
    <ligand>
        <name>[4Fe-4S] cluster</name>
        <dbReference type="ChEBI" id="CHEBI:49883"/>
        <label>1</label>
    </ligand>
</feature>
<comment type="function">
    <text evidence="1">Catalyzes the radical-mediated insertion of two sulfur atoms into the C-6 and C-8 positions of the octanoyl moiety bound to the lipoyl domains of lipoate-dependent enzymes, thereby converting the octanoylated domains into lipoylated derivatives.</text>
</comment>
<comment type="catalytic activity">
    <reaction evidence="1">
        <text>[[Fe-S] cluster scaffold protein carrying a second [4Fe-4S](2+) cluster] + N(6)-octanoyl-L-lysyl-[protein] + 2 oxidized [2Fe-2S]-[ferredoxin] + 2 S-adenosyl-L-methionine + 4 H(+) = [[Fe-S] cluster scaffold protein] + N(6)-[(R)-dihydrolipoyl]-L-lysyl-[protein] + 4 Fe(3+) + 2 hydrogen sulfide + 2 5'-deoxyadenosine + 2 L-methionine + 2 reduced [2Fe-2S]-[ferredoxin]</text>
        <dbReference type="Rhea" id="RHEA:16585"/>
        <dbReference type="Rhea" id="RHEA-COMP:9928"/>
        <dbReference type="Rhea" id="RHEA-COMP:10000"/>
        <dbReference type="Rhea" id="RHEA-COMP:10001"/>
        <dbReference type="Rhea" id="RHEA-COMP:10475"/>
        <dbReference type="Rhea" id="RHEA-COMP:14568"/>
        <dbReference type="Rhea" id="RHEA-COMP:14569"/>
        <dbReference type="ChEBI" id="CHEBI:15378"/>
        <dbReference type="ChEBI" id="CHEBI:17319"/>
        <dbReference type="ChEBI" id="CHEBI:29034"/>
        <dbReference type="ChEBI" id="CHEBI:29919"/>
        <dbReference type="ChEBI" id="CHEBI:33722"/>
        <dbReference type="ChEBI" id="CHEBI:33737"/>
        <dbReference type="ChEBI" id="CHEBI:33738"/>
        <dbReference type="ChEBI" id="CHEBI:57844"/>
        <dbReference type="ChEBI" id="CHEBI:59789"/>
        <dbReference type="ChEBI" id="CHEBI:78809"/>
        <dbReference type="ChEBI" id="CHEBI:83100"/>
        <dbReference type="EC" id="2.8.1.8"/>
    </reaction>
</comment>
<comment type="cofactor">
    <cofactor evidence="1">
        <name>[4Fe-4S] cluster</name>
        <dbReference type="ChEBI" id="CHEBI:49883"/>
    </cofactor>
    <text evidence="1">Binds 2 [4Fe-4S] clusters per subunit. One cluster is coordinated with 3 cysteines and an exchangeable S-adenosyl-L-methionine.</text>
</comment>
<comment type="pathway">
    <text evidence="1">Protein modification; protein lipoylation via endogenous pathway; protein N(6)-(lipoyl)lysine from octanoyl-[acyl-carrier-protein]: step 2/2.</text>
</comment>
<comment type="subcellular location">
    <subcellularLocation>
        <location evidence="1">Cytoplasm</location>
    </subcellularLocation>
</comment>
<comment type="similarity">
    <text evidence="1">Belongs to the radical SAM superfamily. Lipoyl synthase family.</text>
</comment>
<evidence type="ECO:0000255" key="1">
    <source>
        <dbReference type="HAMAP-Rule" id="MF_00206"/>
    </source>
</evidence>
<evidence type="ECO:0000255" key="2">
    <source>
        <dbReference type="PROSITE-ProRule" id="PRU01266"/>
    </source>
</evidence>
<protein>
    <recommendedName>
        <fullName evidence="1">Lipoyl synthase</fullName>
        <ecNumber evidence="1">2.8.1.8</ecNumber>
    </recommendedName>
    <alternativeName>
        <fullName evidence="1">Lip-syn</fullName>
        <shortName evidence="1">LS</shortName>
    </alternativeName>
    <alternativeName>
        <fullName evidence="1">Lipoate synthase</fullName>
    </alternativeName>
    <alternativeName>
        <fullName evidence="1">Lipoic acid synthase</fullName>
    </alternativeName>
    <alternativeName>
        <fullName evidence="1">Sulfur insertion protein LipA</fullName>
    </alternativeName>
</protein>
<gene>
    <name evidence="1" type="primary">lipA</name>
    <name type="ordered locus">NMA1378</name>
</gene>
<name>LIPA_NEIMA</name>